<name>MOB2_YEAST</name>
<evidence type="ECO:0000256" key="1">
    <source>
        <dbReference type="SAM" id="MobiDB-lite"/>
    </source>
</evidence>
<evidence type="ECO:0000269" key="2">
    <source>
    </source>
</evidence>
<evidence type="ECO:0000269" key="3">
    <source>
    </source>
</evidence>
<evidence type="ECO:0000269" key="4">
    <source>
    </source>
</evidence>
<evidence type="ECO:0000269" key="5">
    <source>
    </source>
</evidence>
<evidence type="ECO:0000305" key="6"/>
<evidence type="ECO:0007744" key="7">
    <source>
    </source>
</evidence>
<evidence type="ECO:0007829" key="8">
    <source>
        <dbReference type="PDB" id="5NCL"/>
    </source>
</evidence>
<evidence type="ECO:0007829" key="9">
    <source>
        <dbReference type="PDB" id="5NCM"/>
    </source>
</evidence>
<reference key="1">
    <citation type="journal article" date="1995" name="Nat. Genet.">
        <title>Analysis of the nucleotide sequence of chromosome VI from Saccharomyces cerevisiae.</title>
        <authorList>
            <person name="Murakami Y."/>
            <person name="Naitou M."/>
            <person name="Hagiwara H."/>
            <person name="Shibata T."/>
            <person name="Ozawa M."/>
            <person name="Sasanuma S."/>
            <person name="Sasanuma M."/>
            <person name="Tsuchiya Y."/>
            <person name="Soeda E."/>
            <person name="Yokoyama K."/>
            <person name="Yamazaki M."/>
            <person name="Tashiro H."/>
            <person name="Eki T."/>
        </authorList>
    </citation>
    <scope>NUCLEOTIDE SEQUENCE [LARGE SCALE GENOMIC DNA]</scope>
    <source>
        <strain>ATCC 204508 / S288c</strain>
    </source>
</reference>
<reference key="2">
    <citation type="journal article" date="2014" name="G3 (Bethesda)">
        <title>The reference genome sequence of Saccharomyces cerevisiae: Then and now.</title>
        <authorList>
            <person name="Engel S.R."/>
            <person name="Dietrich F.S."/>
            <person name="Fisk D.G."/>
            <person name="Binkley G."/>
            <person name="Balakrishnan R."/>
            <person name="Costanzo M.C."/>
            <person name="Dwight S.S."/>
            <person name="Hitz B.C."/>
            <person name="Karra K."/>
            <person name="Nash R.S."/>
            <person name="Weng S."/>
            <person name="Wong E.D."/>
            <person name="Lloyd P."/>
            <person name="Skrzypek M.S."/>
            <person name="Miyasato S.R."/>
            <person name="Simison M."/>
            <person name="Cherry J.M."/>
        </authorList>
    </citation>
    <scope>GENOME REANNOTATION</scope>
    <source>
        <strain>ATCC 204508 / S288c</strain>
    </source>
</reference>
<reference key="3">
    <citation type="journal article" date="1998" name="Mol. Biol. Cell">
        <title>MOB1, an essential yeast gene required for completion of mitosis and maintenance of ploidy.</title>
        <authorList>
            <person name="Luca F.C."/>
            <person name="Winey M."/>
        </authorList>
    </citation>
    <scope>IDENTIFICATION OF INTRON</scope>
</reference>
<reference key="4">
    <citation type="journal article" date="2001" name="Cell">
        <title>Yeast Cbk1 and Mob2 activate daughter-specific genetic programs to induce asymmetric cell fates.</title>
        <authorList>
            <person name="Colman-Lerner A."/>
            <person name="Chin T.E."/>
            <person name="Brent R."/>
        </authorList>
    </citation>
    <scope>FUNCTION</scope>
    <scope>SUBCELLULAR LOCATION</scope>
</reference>
<reference key="5">
    <citation type="journal article" date="2002" name="J. Cell Biol.">
        <title>The Saccharomyces cerevisiae Mob2p-Cbk1p kinase complex promotes polarized growth and acts with the mitotic exit network to facilitate daughter cell-specific localization of Ace2p transcription factor.</title>
        <authorList>
            <person name="Weiss E.L."/>
            <person name="Kurischko C."/>
            <person name="Zhang C."/>
            <person name="Shokat K."/>
            <person name="Drubin D.G."/>
            <person name="Luca F.C."/>
        </authorList>
    </citation>
    <scope>FUNCTION</scope>
    <scope>INTERACTION WITH CBK1</scope>
    <scope>SUBCELLULAR LOCATION</scope>
</reference>
<reference key="6">
    <citation type="journal article" date="2003" name="Nature">
        <title>Global analysis of protein expression in yeast.</title>
        <authorList>
            <person name="Ghaemmaghami S."/>
            <person name="Huh W.-K."/>
            <person name="Bower K."/>
            <person name="Howson R.W."/>
            <person name="Belle A."/>
            <person name="Dephoure N."/>
            <person name="O'Shea E.K."/>
            <person name="Weissman J.S."/>
        </authorList>
    </citation>
    <scope>LEVEL OF PROTEIN EXPRESSION [LARGE SCALE ANALYSIS]</scope>
</reference>
<reference key="7">
    <citation type="journal article" date="2006" name="J. Mol. Biol.">
        <title>Structural and functional analysis of Saccharomyces cerevisiae Mob1.</title>
        <authorList>
            <person name="Mrkobrada S."/>
            <person name="Boucher L."/>
            <person name="Ceccarelli D.F.J."/>
            <person name="Tyers M."/>
            <person name="Sicheri F."/>
        </authorList>
    </citation>
    <scope>INTERACTION WITH MOB1</scope>
</reference>
<reference key="8">
    <citation type="journal article" date="2007" name="J. Proteome Res.">
        <title>Large-scale phosphorylation analysis of alpha-factor-arrested Saccharomyces cerevisiae.</title>
        <authorList>
            <person name="Li X."/>
            <person name="Gerber S.A."/>
            <person name="Rudner A.D."/>
            <person name="Beausoleil S.A."/>
            <person name="Haas W."/>
            <person name="Villen J."/>
            <person name="Elias J.E."/>
            <person name="Gygi S.P."/>
        </authorList>
    </citation>
    <scope>IDENTIFICATION BY MASS SPECTROMETRY [LARGE SCALE ANALYSIS]</scope>
    <source>
        <strain>ADR376</strain>
    </source>
</reference>
<reference key="9">
    <citation type="journal article" date="2007" name="Proc. Natl. Acad. Sci. U.S.A.">
        <title>Analysis of phosphorylation sites on proteins from Saccharomyces cerevisiae by electron transfer dissociation (ETD) mass spectrometry.</title>
        <authorList>
            <person name="Chi A."/>
            <person name="Huttenhower C."/>
            <person name="Geer L.Y."/>
            <person name="Coon J.J."/>
            <person name="Syka J.E.P."/>
            <person name="Bai D.L."/>
            <person name="Shabanowitz J."/>
            <person name="Burke D.J."/>
            <person name="Troyanskaya O.G."/>
            <person name="Hunt D.F."/>
        </authorList>
    </citation>
    <scope>IDENTIFICATION BY MASS SPECTROMETRY [LARGE SCALE ANALYSIS]</scope>
</reference>
<reference key="10">
    <citation type="journal article" date="2009" name="Science">
        <title>Global analysis of Cdk1 substrate phosphorylation sites provides insights into evolution.</title>
        <authorList>
            <person name="Holt L.J."/>
            <person name="Tuch B.B."/>
            <person name="Villen J."/>
            <person name="Johnson A.D."/>
            <person name="Gygi S.P."/>
            <person name="Morgan D.O."/>
        </authorList>
    </citation>
    <scope>PHOSPHORYLATION [LARGE SCALE ANALYSIS] AT TYR-33; SER-59 AND THR-76</scope>
    <scope>IDENTIFICATION BY MASS SPECTROMETRY [LARGE SCALE ANALYSIS]</scope>
</reference>
<gene>
    <name type="primary">MOB2</name>
    <name type="ordered locus">YFL034C-B</name>
    <name type="ORF">YFL035C</name>
    <name type="ORF">YFL035C-A</name>
</gene>
<organism>
    <name type="scientific">Saccharomyces cerevisiae (strain ATCC 204508 / S288c)</name>
    <name type="common">Baker's yeast</name>
    <dbReference type="NCBI Taxonomy" id="559292"/>
    <lineage>
        <taxon>Eukaryota</taxon>
        <taxon>Fungi</taxon>
        <taxon>Dikarya</taxon>
        <taxon>Ascomycota</taxon>
        <taxon>Saccharomycotina</taxon>
        <taxon>Saccharomycetes</taxon>
        <taxon>Saccharomycetales</taxon>
        <taxon>Saccharomycetaceae</taxon>
        <taxon>Saccharomyces</taxon>
    </lineage>
</organism>
<protein>
    <recommendedName>
        <fullName>CBK1 kinase activator protein MOB2</fullName>
    </recommendedName>
    <alternativeName>
        <fullName>MPS1 binder 2</fullName>
    </alternativeName>
    <alternativeName>
        <fullName>Maintenance of ploidy protein MOB2</fullName>
    </alternativeName>
</protein>
<feature type="chain" id="PRO_0000193583" description="CBK1 kinase activator protein MOB2">
    <location>
        <begin position="1"/>
        <end position="287"/>
    </location>
</feature>
<feature type="region of interest" description="Disordered" evidence="1">
    <location>
        <begin position="1"/>
        <end position="89"/>
    </location>
</feature>
<feature type="compositionally biased region" description="Low complexity" evidence="1">
    <location>
        <begin position="34"/>
        <end position="44"/>
    </location>
</feature>
<feature type="compositionally biased region" description="Basic residues" evidence="1">
    <location>
        <begin position="45"/>
        <end position="56"/>
    </location>
</feature>
<feature type="compositionally biased region" description="Low complexity" evidence="1">
    <location>
        <begin position="63"/>
        <end position="83"/>
    </location>
</feature>
<feature type="modified residue" description="Phosphotyrosine" evidence="7">
    <location>
        <position position="33"/>
    </location>
</feature>
<feature type="modified residue" description="Phosphoserine" evidence="7">
    <location>
        <position position="59"/>
    </location>
</feature>
<feature type="modified residue" description="Phosphothreonine" evidence="7">
    <location>
        <position position="76"/>
    </location>
</feature>
<feature type="helix" evidence="9">
    <location>
        <begin position="111"/>
        <end position="114"/>
    </location>
</feature>
<feature type="helix" evidence="9">
    <location>
        <begin position="122"/>
        <end position="144"/>
    </location>
</feature>
<feature type="helix" evidence="9">
    <location>
        <begin position="145"/>
        <end position="147"/>
    </location>
</feature>
<feature type="helix" evidence="9">
    <location>
        <begin position="178"/>
        <end position="193"/>
    </location>
</feature>
<feature type="turn" evidence="9">
    <location>
        <begin position="196"/>
        <end position="198"/>
    </location>
</feature>
<feature type="strand" evidence="9">
    <location>
        <begin position="202"/>
        <end position="204"/>
    </location>
</feature>
<feature type="helix" evidence="9">
    <location>
        <begin position="211"/>
        <end position="232"/>
    </location>
</feature>
<feature type="helix" evidence="9">
    <location>
        <begin position="234"/>
        <end position="239"/>
    </location>
</feature>
<feature type="helix" evidence="9">
    <location>
        <begin position="243"/>
        <end position="259"/>
    </location>
</feature>
<feature type="helix" evidence="9">
    <location>
        <begin position="266"/>
        <end position="268"/>
    </location>
</feature>
<feature type="turn" evidence="8">
    <location>
        <begin position="269"/>
        <end position="271"/>
    </location>
</feature>
<feature type="helix" evidence="9">
    <location>
        <begin position="272"/>
        <end position="277"/>
    </location>
</feature>
<feature type="turn" evidence="9">
    <location>
        <begin position="278"/>
        <end position="281"/>
    </location>
</feature>
<proteinExistence type="evidence at protein level"/>
<dbReference type="EMBL" id="D50617">
    <property type="protein sequence ID" value="BAA09204.1"/>
    <property type="status" value="ALT_SEQ"/>
    <property type="molecule type" value="Genomic_DNA"/>
</dbReference>
<dbReference type="EMBL" id="BK006940">
    <property type="protein sequence ID" value="DAA12405.1"/>
    <property type="molecule type" value="Genomic_DNA"/>
</dbReference>
<dbReference type="PIR" id="S58648">
    <property type="entry name" value="S58648"/>
</dbReference>
<dbReference type="RefSeq" id="NP_116618.1">
    <property type="nucleotide sequence ID" value="NM_001179931.1"/>
</dbReference>
<dbReference type="PDB" id="4LQP">
    <property type="method" value="X-ray"/>
    <property type="resolution" value="4.50 A"/>
    <property type="chains" value="B=46-287"/>
</dbReference>
<dbReference type="PDB" id="4LQQ">
    <property type="method" value="X-ray"/>
    <property type="resolution" value="3.60 A"/>
    <property type="chains" value="B/E=46-287"/>
</dbReference>
<dbReference type="PDB" id="4LQS">
    <property type="method" value="X-ray"/>
    <property type="resolution" value="3.30 A"/>
    <property type="chains" value="B=46-287"/>
</dbReference>
<dbReference type="PDB" id="5NCL">
    <property type="method" value="X-ray"/>
    <property type="resolution" value="3.15 A"/>
    <property type="chains" value="B=46-287"/>
</dbReference>
<dbReference type="PDB" id="5NCM">
    <property type="method" value="X-ray"/>
    <property type="resolution" value="2.80 A"/>
    <property type="chains" value="A=44-287"/>
</dbReference>
<dbReference type="PDBsum" id="4LQP"/>
<dbReference type="PDBsum" id="4LQQ"/>
<dbReference type="PDBsum" id="4LQS"/>
<dbReference type="PDBsum" id="5NCL"/>
<dbReference type="PDBsum" id="5NCM"/>
<dbReference type="SMR" id="P43563"/>
<dbReference type="BioGRID" id="31111">
    <property type="interactions" value="1753"/>
</dbReference>
<dbReference type="ComplexPortal" id="CPX-1684">
    <property type="entry name" value="CBK1-MOB2 kinase complex"/>
</dbReference>
<dbReference type="DIP" id="DIP-1449N"/>
<dbReference type="FunCoup" id="P43563">
    <property type="interactions" value="185"/>
</dbReference>
<dbReference type="IntAct" id="P43563">
    <property type="interactions" value="19"/>
</dbReference>
<dbReference type="MINT" id="P43563"/>
<dbReference type="STRING" id="4932.YFL034C-B"/>
<dbReference type="GlyGen" id="P43563">
    <property type="glycosylation" value="1 site, 1 O-linked glycan (1 site)"/>
</dbReference>
<dbReference type="iPTMnet" id="P43563"/>
<dbReference type="PaxDb" id="4932-YFL034C-B"/>
<dbReference type="PeptideAtlas" id="P43563"/>
<dbReference type="EnsemblFungi" id="YFL034C-B_mRNA">
    <property type="protein sequence ID" value="YFL034C-B"/>
    <property type="gene ID" value="YFL034C-B"/>
</dbReference>
<dbReference type="GeneID" id="850508"/>
<dbReference type="KEGG" id="sce:YFL034C-B"/>
<dbReference type="AGR" id="SGD:S000001859"/>
<dbReference type="SGD" id="S000001859">
    <property type="gene designation" value="MOB2"/>
</dbReference>
<dbReference type="VEuPathDB" id="FungiDB:YFL034C-B"/>
<dbReference type="eggNOG" id="KOG0440">
    <property type="taxonomic scope" value="Eukaryota"/>
</dbReference>
<dbReference type="GeneTree" id="ENSGT01120000271909"/>
<dbReference type="HOGENOM" id="CLU_038321_2_1_1"/>
<dbReference type="InParanoid" id="P43563"/>
<dbReference type="OMA" id="CNHSSER"/>
<dbReference type="OrthoDB" id="10261121at2759"/>
<dbReference type="BioCyc" id="YEAST:G3O-30427-MONOMER"/>
<dbReference type="BioGRID-ORCS" id="850508">
    <property type="hits" value="8 hits in 10 CRISPR screens"/>
</dbReference>
<dbReference type="EvolutionaryTrace" id="P43563"/>
<dbReference type="PRO" id="PR:P43563"/>
<dbReference type="Proteomes" id="UP000002311">
    <property type="component" value="Chromosome VI"/>
</dbReference>
<dbReference type="RNAct" id="P43563">
    <property type="molecule type" value="protein"/>
</dbReference>
<dbReference type="GO" id="GO:0005933">
    <property type="term" value="C:cellular bud"/>
    <property type="evidence" value="ECO:0000314"/>
    <property type="project" value="SGD"/>
</dbReference>
<dbReference type="GO" id="GO:0005935">
    <property type="term" value="C:cellular bud neck"/>
    <property type="evidence" value="ECO:0000314"/>
    <property type="project" value="ComplexPortal"/>
</dbReference>
<dbReference type="GO" id="GO:0005934">
    <property type="term" value="C:cellular bud tip"/>
    <property type="evidence" value="ECO:0000314"/>
    <property type="project" value="ComplexPortal"/>
</dbReference>
<dbReference type="GO" id="GO:0005737">
    <property type="term" value="C:cytoplasm"/>
    <property type="evidence" value="ECO:0000318"/>
    <property type="project" value="GO_Central"/>
</dbReference>
<dbReference type="GO" id="GO:0043332">
    <property type="term" value="C:mating projection tip"/>
    <property type="evidence" value="ECO:0000314"/>
    <property type="project" value="SGD"/>
</dbReference>
<dbReference type="GO" id="GO:0005634">
    <property type="term" value="C:nucleus"/>
    <property type="evidence" value="ECO:0000314"/>
    <property type="project" value="ComplexPortal"/>
</dbReference>
<dbReference type="GO" id="GO:1902554">
    <property type="term" value="C:serine/threonine protein kinase complex"/>
    <property type="evidence" value="ECO:0000353"/>
    <property type="project" value="ComplexPortal"/>
</dbReference>
<dbReference type="GO" id="GO:0030295">
    <property type="term" value="F:protein kinase activator activity"/>
    <property type="evidence" value="ECO:0000314"/>
    <property type="project" value="SGD"/>
</dbReference>
<dbReference type="GO" id="GO:0007118">
    <property type="term" value="P:budding cell apical bud growth"/>
    <property type="evidence" value="ECO:0000315"/>
    <property type="project" value="SGD"/>
</dbReference>
<dbReference type="GO" id="GO:0051301">
    <property type="term" value="P:cell division"/>
    <property type="evidence" value="ECO:0000318"/>
    <property type="project" value="GO_Central"/>
</dbReference>
<dbReference type="GO" id="GO:0007163">
    <property type="term" value="P:establishment or maintenance of cell polarity"/>
    <property type="evidence" value="ECO:0000314"/>
    <property type="project" value="ComplexPortal"/>
</dbReference>
<dbReference type="GO" id="GO:0000920">
    <property type="term" value="P:septum digestion after cytokinesis"/>
    <property type="evidence" value="ECO:0000314"/>
    <property type="project" value="ComplexPortal"/>
</dbReference>
<dbReference type="GO" id="GO:0007165">
    <property type="term" value="P:signal transduction"/>
    <property type="evidence" value="ECO:0000318"/>
    <property type="project" value="GO_Central"/>
</dbReference>
<dbReference type="FunFam" id="1.20.140.30:FF:000004">
    <property type="entry name" value="CBK1 kinase activator protein MOB2"/>
    <property type="match status" value="1"/>
</dbReference>
<dbReference type="Gene3D" id="1.20.140.30">
    <property type="entry name" value="MOB kinase activator"/>
    <property type="match status" value="1"/>
</dbReference>
<dbReference type="InterPro" id="IPR005301">
    <property type="entry name" value="MOB_kinase_act_fam"/>
</dbReference>
<dbReference type="InterPro" id="IPR036703">
    <property type="entry name" value="MOB_kinase_act_sf"/>
</dbReference>
<dbReference type="PANTHER" id="PTHR22599">
    <property type="entry name" value="MPS ONE BINDER KINASE ACTIVATOR-LIKE MOB"/>
    <property type="match status" value="1"/>
</dbReference>
<dbReference type="Pfam" id="PF03637">
    <property type="entry name" value="Mob1_phocein"/>
    <property type="match status" value="1"/>
</dbReference>
<dbReference type="SMART" id="SM01388">
    <property type="entry name" value="Mob1_phocein"/>
    <property type="match status" value="1"/>
</dbReference>
<dbReference type="SUPFAM" id="SSF101152">
    <property type="entry name" value="Mob1/phocein"/>
    <property type="match status" value="1"/>
</dbReference>
<sequence length="287" mass="33276">MSFFNFKAFGRNSKKNKNQPLNVAQPPAMNTIYSSPHSSNSRLSLRNKHHSPKRHSQTSFPAQKSTPQSQQLTSTTPQSQQQEASERSESQQIMFLSEPFVRTALVKGSFKTIVQLPKYVDLGEWIALNVFEFFTNLNQFYGVVAEYVTPDAYPTMNAGPHTDYLWLDANNRQVSLPASQYIDLALTWINNKVNDKNLFPTKNGLPFPQQFSRDVQRIMVQMFRIFAHIYHHHFDKIVHLSLEAHWNSFFSHFISFAKEFKIIDRKEMAPLLPLIESFEKQGKIIYN</sequence>
<keyword id="KW-0002">3D-structure</keyword>
<keyword id="KW-0131">Cell cycle</keyword>
<keyword id="KW-0132">Cell division</keyword>
<keyword id="KW-0963">Cytoplasm</keyword>
<keyword id="KW-0498">Mitosis</keyword>
<keyword id="KW-0539">Nucleus</keyword>
<keyword id="KW-0597">Phosphoprotein</keyword>
<keyword id="KW-1185">Reference proteome</keyword>
<accession>P43563</accession>
<accession>D6VTJ5</accession>
<comment type="function">
    <text evidence="2 3">Functions as an activator subunit for the CBK1 protein kinase. Part of the regulation of ACE2 activity and cellular morphogenesis (RAM) signaling network. Required for coordinating polarized cell growth during interphase with the onset of mitosis. Required for mother/daughter cell separation after cytokinesis. Also has a role in the prevention of nuclear export of ACE2 from the daughter cell nucleus after mitotic exit. It coordinates ACE2-dependent transcription with mitotic exit network activation.</text>
</comment>
<comment type="subunit">
    <text evidence="3 5">Interacts with protein kinase CBK1 to form the RAM CBK1-MOB2 kinase complex.</text>
</comment>
<comment type="interaction">
    <interactant intactId="EBI-11125">
        <id>P43563</id>
    </interactant>
    <interactant intactId="EBI-4110">
        <id>P53894</id>
        <label>CBK1</label>
    </interactant>
    <organismsDiffer>false</organismsDiffer>
    <experiments>8</experiments>
</comment>
<comment type="subcellular location">
    <subcellularLocation>
        <location>Nucleus</location>
    </subcellularLocation>
    <subcellularLocation>
        <location>Cytoplasm</location>
    </subcellularLocation>
    <text>Localizes to the bud cortex during polarized growth and to the bud neck and daughter cell nucleus during late mitosis.</text>
</comment>
<comment type="miscellaneous">
    <text evidence="4">Present with 2250 molecules/cell in log phase SD medium.</text>
</comment>
<comment type="similarity">
    <text evidence="6">Belongs to the MOB1/phocein family.</text>
</comment>
<comment type="sequence caution" evidence="6">
    <conflict type="erroneous gene model prediction">
        <sequence resource="EMBL-CDS" id="BAA09204"/>
    </conflict>
</comment>